<name>RPOC1_OENAR</name>
<gene>
    <name evidence="1" type="primary">rpoC1</name>
</gene>
<accession>B0Z4M6</accession>
<proteinExistence type="inferred from homology"/>
<evidence type="ECO:0000255" key="1">
    <source>
        <dbReference type="HAMAP-Rule" id="MF_01323"/>
    </source>
</evidence>
<comment type="function">
    <text evidence="1">DNA-dependent RNA polymerase catalyzes the transcription of DNA into RNA using the four ribonucleoside triphosphates as substrates.</text>
</comment>
<comment type="catalytic activity">
    <reaction evidence="1">
        <text>RNA(n) + a ribonucleoside 5'-triphosphate = RNA(n+1) + diphosphate</text>
        <dbReference type="Rhea" id="RHEA:21248"/>
        <dbReference type="Rhea" id="RHEA-COMP:14527"/>
        <dbReference type="Rhea" id="RHEA-COMP:17342"/>
        <dbReference type="ChEBI" id="CHEBI:33019"/>
        <dbReference type="ChEBI" id="CHEBI:61557"/>
        <dbReference type="ChEBI" id="CHEBI:140395"/>
        <dbReference type="EC" id="2.7.7.6"/>
    </reaction>
</comment>
<comment type="cofactor">
    <cofactor evidence="1">
        <name>Mg(2+)</name>
        <dbReference type="ChEBI" id="CHEBI:18420"/>
    </cofactor>
    <text evidence="1">Binds 1 Mg(2+) ion per subunit.</text>
</comment>
<comment type="cofactor">
    <cofactor evidence="1">
        <name>Zn(2+)</name>
        <dbReference type="ChEBI" id="CHEBI:29105"/>
    </cofactor>
    <text evidence="1">Binds 1 Zn(2+) ion per subunit.</text>
</comment>
<comment type="subunit">
    <text evidence="1">In plastids the minimal PEP RNA polymerase catalytic core is composed of four subunits: alpha, beta, beta', and beta''. When a (nuclear-encoded) sigma factor is associated with the core the holoenzyme is formed, which can initiate transcription.</text>
</comment>
<comment type="subcellular location">
    <subcellularLocation>
        <location evidence="1">Plastid</location>
        <location evidence="1">Chloroplast</location>
    </subcellularLocation>
</comment>
<comment type="similarity">
    <text evidence="1">Belongs to the RNA polymerase beta' chain family. RpoC1 subfamily.</text>
</comment>
<geneLocation type="chloroplast"/>
<organism>
    <name type="scientific">Oenothera argillicola</name>
    <name type="common">Appalachian evening primrose</name>
    <dbReference type="NCBI Taxonomy" id="3940"/>
    <lineage>
        <taxon>Eukaryota</taxon>
        <taxon>Viridiplantae</taxon>
        <taxon>Streptophyta</taxon>
        <taxon>Embryophyta</taxon>
        <taxon>Tracheophyta</taxon>
        <taxon>Spermatophyta</taxon>
        <taxon>Magnoliopsida</taxon>
        <taxon>eudicotyledons</taxon>
        <taxon>Gunneridae</taxon>
        <taxon>Pentapetalae</taxon>
        <taxon>rosids</taxon>
        <taxon>malvids</taxon>
        <taxon>Myrtales</taxon>
        <taxon>Onagraceae</taxon>
        <taxon>Onagroideae</taxon>
        <taxon>Onagreae</taxon>
        <taxon>Oenothera</taxon>
    </lineage>
</organism>
<protein>
    <recommendedName>
        <fullName evidence="1">DNA-directed RNA polymerase subunit beta'</fullName>
        <ecNumber evidence="1">2.7.7.6</ecNumber>
    </recommendedName>
    <alternativeName>
        <fullName evidence="1">PEP</fullName>
    </alternativeName>
    <alternativeName>
        <fullName evidence="1">Plastid-encoded RNA polymerase subunit beta'</fullName>
        <shortName evidence="1">RNA polymerase subunit beta'</shortName>
    </alternativeName>
</protein>
<feature type="chain" id="PRO_0000353504" description="DNA-directed RNA polymerase subunit beta'">
    <location>
        <begin position="1"/>
        <end position="679"/>
    </location>
</feature>
<feature type="binding site" evidence="1">
    <location>
        <position position="69"/>
    </location>
    <ligand>
        <name>Zn(2+)</name>
        <dbReference type="ChEBI" id="CHEBI:29105"/>
    </ligand>
</feature>
<feature type="binding site" evidence="1">
    <location>
        <position position="71"/>
    </location>
    <ligand>
        <name>Zn(2+)</name>
        <dbReference type="ChEBI" id="CHEBI:29105"/>
    </ligand>
</feature>
<feature type="binding site" evidence="1">
    <location>
        <position position="87"/>
    </location>
    <ligand>
        <name>Zn(2+)</name>
        <dbReference type="ChEBI" id="CHEBI:29105"/>
    </ligand>
</feature>
<feature type="binding site" evidence="1">
    <location>
        <position position="90"/>
    </location>
    <ligand>
        <name>Zn(2+)</name>
        <dbReference type="ChEBI" id="CHEBI:29105"/>
    </ligand>
</feature>
<feature type="binding site" evidence="1">
    <location>
        <position position="489"/>
    </location>
    <ligand>
        <name>Mg(2+)</name>
        <dbReference type="ChEBI" id="CHEBI:18420"/>
    </ligand>
</feature>
<feature type="binding site" evidence="1">
    <location>
        <position position="491"/>
    </location>
    <ligand>
        <name>Mg(2+)</name>
        <dbReference type="ChEBI" id="CHEBI:18420"/>
    </ligand>
</feature>
<feature type="binding site" evidence="1">
    <location>
        <position position="493"/>
    </location>
    <ligand>
        <name>Mg(2+)</name>
        <dbReference type="ChEBI" id="CHEBI:18420"/>
    </ligand>
</feature>
<dbReference type="EC" id="2.7.7.6" evidence="1"/>
<dbReference type="EMBL" id="EU262887">
    <property type="protein sequence ID" value="ABW98704.1"/>
    <property type="molecule type" value="Genomic_DNA"/>
</dbReference>
<dbReference type="RefSeq" id="YP_001687137.1">
    <property type="nucleotide sequence ID" value="NC_010358.2"/>
</dbReference>
<dbReference type="SMR" id="B0Z4M6"/>
<dbReference type="GeneID" id="5951847"/>
<dbReference type="GO" id="GO:0009507">
    <property type="term" value="C:chloroplast"/>
    <property type="evidence" value="ECO:0007669"/>
    <property type="project" value="UniProtKB-SubCell"/>
</dbReference>
<dbReference type="GO" id="GO:0000428">
    <property type="term" value="C:DNA-directed RNA polymerase complex"/>
    <property type="evidence" value="ECO:0007669"/>
    <property type="project" value="UniProtKB-KW"/>
</dbReference>
<dbReference type="GO" id="GO:0005739">
    <property type="term" value="C:mitochondrion"/>
    <property type="evidence" value="ECO:0007669"/>
    <property type="project" value="GOC"/>
</dbReference>
<dbReference type="GO" id="GO:0003677">
    <property type="term" value="F:DNA binding"/>
    <property type="evidence" value="ECO:0007669"/>
    <property type="project" value="UniProtKB-UniRule"/>
</dbReference>
<dbReference type="GO" id="GO:0003899">
    <property type="term" value="F:DNA-directed RNA polymerase activity"/>
    <property type="evidence" value="ECO:0007669"/>
    <property type="project" value="UniProtKB-UniRule"/>
</dbReference>
<dbReference type="GO" id="GO:0000287">
    <property type="term" value="F:magnesium ion binding"/>
    <property type="evidence" value="ECO:0007669"/>
    <property type="project" value="UniProtKB-UniRule"/>
</dbReference>
<dbReference type="GO" id="GO:0008270">
    <property type="term" value="F:zinc ion binding"/>
    <property type="evidence" value="ECO:0007669"/>
    <property type="project" value="UniProtKB-UniRule"/>
</dbReference>
<dbReference type="GO" id="GO:0006351">
    <property type="term" value="P:DNA-templated transcription"/>
    <property type="evidence" value="ECO:0007669"/>
    <property type="project" value="UniProtKB-UniRule"/>
</dbReference>
<dbReference type="FunFam" id="4.10.860.120:FF:000007">
    <property type="entry name" value="DNA-directed RNA polymerase subunit gamma"/>
    <property type="match status" value="1"/>
</dbReference>
<dbReference type="Gene3D" id="1.10.40.90">
    <property type="match status" value="1"/>
</dbReference>
<dbReference type="Gene3D" id="2.40.40.20">
    <property type="match status" value="1"/>
</dbReference>
<dbReference type="Gene3D" id="4.10.860.120">
    <property type="entry name" value="RNA polymerase II, clamp domain"/>
    <property type="match status" value="1"/>
</dbReference>
<dbReference type="Gene3D" id="1.10.274.100">
    <property type="entry name" value="RNA polymerase Rpb1, domain 3"/>
    <property type="match status" value="1"/>
</dbReference>
<dbReference type="HAMAP" id="MF_01323">
    <property type="entry name" value="RNApol_bact_RpoC1"/>
    <property type="match status" value="1"/>
</dbReference>
<dbReference type="InterPro" id="IPR045867">
    <property type="entry name" value="DNA-dir_RpoC_beta_prime"/>
</dbReference>
<dbReference type="InterPro" id="IPR000722">
    <property type="entry name" value="RNA_pol_asu"/>
</dbReference>
<dbReference type="InterPro" id="IPR006592">
    <property type="entry name" value="RNA_pol_N"/>
</dbReference>
<dbReference type="InterPro" id="IPR007080">
    <property type="entry name" value="RNA_pol_Rpb1_1"/>
</dbReference>
<dbReference type="InterPro" id="IPR042102">
    <property type="entry name" value="RNA_pol_Rpb1_3_sf"/>
</dbReference>
<dbReference type="InterPro" id="IPR044893">
    <property type="entry name" value="RNA_pol_Rpb1_clamp_domain"/>
</dbReference>
<dbReference type="InterPro" id="IPR034678">
    <property type="entry name" value="RNApol_RpoC1"/>
</dbReference>
<dbReference type="PANTHER" id="PTHR19376">
    <property type="entry name" value="DNA-DIRECTED RNA POLYMERASE"/>
    <property type="match status" value="1"/>
</dbReference>
<dbReference type="PANTHER" id="PTHR19376:SF54">
    <property type="entry name" value="DNA-DIRECTED RNA POLYMERASE SUBUNIT BETA"/>
    <property type="match status" value="1"/>
</dbReference>
<dbReference type="Pfam" id="PF04997">
    <property type="entry name" value="RNA_pol_Rpb1_1"/>
    <property type="match status" value="2"/>
</dbReference>
<dbReference type="Pfam" id="PF00623">
    <property type="entry name" value="RNA_pol_Rpb1_2"/>
    <property type="match status" value="1"/>
</dbReference>
<dbReference type="SMART" id="SM00663">
    <property type="entry name" value="RPOLA_N"/>
    <property type="match status" value="1"/>
</dbReference>
<dbReference type="SUPFAM" id="SSF64484">
    <property type="entry name" value="beta and beta-prime subunits of DNA dependent RNA-polymerase"/>
    <property type="match status" value="1"/>
</dbReference>
<reference key="1">
    <citation type="journal article" date="2008" name="Nucleic Acids Res.">
        <title>The complete nucleotide sequences of the five genetically distinct plastid genomes of Oenothera, subsection Oenothera: I. Sequence evaluation and plastome evolution.</title>
        <authorList>
            <person name="Greiner S."/>
            <person name="Wang X."/>
            <person name="Rauwolf U."/>
            <person name="Silber M.V."/>
            <person name="Mayer K."/>
            <person name="Meurer J."/>
            <person name="Haberer G."/>
            <person name="Herrmann R.G."/>
        </authorList>
    </citation>
    <scope>NUCLEOTIDE SEQUENCE [LARGE SCALE GENOMIC DNA]</scope>
    <source>
        <strain>cv. Douthat 1</strain>
    </source>
</reference>
<keyword id="KW-0150">Chloroplast</keyword>
<keyword id="KW-0240">DNA-directed RNA polymerase</keyword>
<keyword id="KW-0460">Magnesium</keyword>
<keyword id="KW-0479">Metal-binding</keyword>
<keyword id="KW-0548">Nucleotidyltransferase</keyword>
<keyword id="KW-0934">Plastid</keyword>
<keyword id="KW-0804">Transcription</keyword>
<keyword id="KW-0808">Transferase</keyword>
<keyword id="KW-0862">Zinc</keyword>
<sequence>MIDRYKHQQLRIGSVSPQQISTWANKILPNGEIVGEVTKPYTFHYKTNKPERDGLFCERIFGPIKSGICACGTYRVIGDKKEDPNFCEQCGVEFVDSRIRRYQMGYIKLACPATHVWYLKRLPSYIANLLDKPLKELEGLVYCDFSFARPVAKKPTFLRLRGLFEYEIQSWKYSIPLFFTTQGFDTFRNREISTGAGAIREQLAGLDLRVIIDYSLVEWKELGEERSTGNEWEDRKIGRRKQFLVRRVELAKHFIRTNIEPEWMVLCLLPVLPPELRPIIQMDGGKLMSSDINELYRRVIYRNNILADLLTTSRSTPGDLVMGQEKLVQEAVDTLLDNGIRSRPVRDGQNKVYKSFSDVIEGKEGRFRETLLGKRVDYSGRSVIVVGPTLPLHRCGLPREIAIELFQTFLIRGLIRQHLASDIVGAKSQIREKEPIVWEILQQVMQGHPVLLNRAPTLHRLGIQAFQPILVEGRAICLHPLVCKGFNADFDGDQMAVHVPLSLEAQTEARLLMFSHMNLLSPAMGDPISVPTQDMLIGLYILTSGNPRGICTNRYNPWNRSNYQNERISDNNWKKKEPFFCNSYDAIGAYRQKRIHLDSPLWLRWRLDQRVIASREVPIEVQYESLGTYHEIYGHYIIVRSVKTEILWMYIRTTVGHISLFREMEEAIQGFCRARWYLS</sequence>